<name>CASPA_HUMAN</name>
<comment type="function">
    <text evidence="7 12">Involved in the activation cascade of caspases responsible for apoptosis execution. Recruited to both Fas- and TNFR-1 receptors in a FADD dependent manner. May participate in the granzyme B apoptotic pathways. Cleaves and activates effector caspases CASP3, CASP4, CASP6, CASP7, CASP8 and CASP9. Hydrolyzes the small- molecule substrates, Tyr-Val-Ala-Asp-|-AMC and Asp-Glu-Val-Asp-|-AMC.</text>
</comment>
<comment type="function">
    <text evidence="13">Isoform 7 can enhance NF-kappaB activity but promotes only slight apoptosis.</text>
</comment>
<comment type="function">
    <text evidence="7">Isoform C is proteolytically inactive.</text>
</comment>
<comment type="catalytic activity">
    <reaction evidence="12">
        <text>Strict requirement for Asp at position P1 and has a preferred cleavage sequence of Leu-Gln-Thr-Asp-|-Gly.</text>
        <dbReference type="EC" id="3.4.22.63"/>
    </reaction>
</comment>
<comment type="subunit">
    <text evidence="1 7 10 14">Heterotetramer that consists of two anti-parallel arranged heterodimers, each one formed by a 23/17 kDa (p23/17) (depending on the splicing events) and a 12 kDa (p12) subunit (By similarity). Self-associates. Interacts with FADD and CASP8. Found in a Fas signaling complex consisting of FAS, FADD, CASP8 and CASP10. Interacts with RFFL and RNF34; negatively regulate CASP10 through proteasomal degradation. Interacts with RIOK3.</text>
</comment>
<comment type="interaction">
    <interactant intactId="EBI-495095">
        <id>Q92851</id>
    </interactant>
    <interactant intactId="EBI-78060">
        <id>Q14790</id>
        <label>CASP8</label>
    </interactant>
    <organismsDiffer>false</organismsDiffer>
    <experiments>3</experiments>
</comment>
<comment type="interaction">
    <interactant intactId="EBI-495095">
        <id>Q92851</id>
    </interactant>
    <interactant intactId="EBI-514941">
        <id>O15519</id>
        <label>CFLAR</label>
    </interactant>
    <organismsDiffer>false</organismsDiffer>
    <experiments>3</experiments>
</comment>
<comment type="interaction">
    <interactant intactId="EBI-495095">
        <id>Q92851</id>
    </interactant>
    <interactant intactId="EBI-1047061">
        <id>O14730</id>
        <label>RIOK3</label>
    </interactant>
    <organismsDiffer>false</organismsDiffer>
    <experiments>6</experiments>
</comment>
<comment type="interaction">
    <interactant intactId="EBI-495095">
        <id>Q92851</id>
    </interactant>
    <interactant intactId="EBI-358507">
        <id>Q13546</id>
        <label>RIPK1</label>
    </interactant>
    <organismsDiffer>false</organismsDiffer>
    <experiments>2</experiments>
</comment>
<comment type="interaction">
    <interactant intactId="EBI-495095">
        <id>Q92851</id>
    </interactant>
    <interactant intactId="EBI-517127">
        <id>P98170</id>
        <label>XIAP</label>
    </interactant>
    <organismsDiffer>false</organismsDiffer>
    <experiments>3</experiments>
</comment>
<comment type="interaction">
    <interactant intactId="EBI-6621134">
        <id>Q92851-4</id>
    </interactant>
    <interactant intactId="EBI-4478097">
        <id>PRO_0000004678</id>
        <label>CFLAR</label>
        <dbReference type="UniProtKB" id="O15519"/>
    </interactant>
    <organismsDiffer>false</organismsDiffer>
    <experiments>3</experiments>
</comment>
<comment type="interaction">
    <interactant intactId="EBI-6621134">
        <id>Q92851-4</id>
    </interactant>
    <interactant intactId="EBI-517127">
        <id>P98170</id>
        <label>XIAP</label>
    </interactant>
    <organismsDiffer>false</organismsDiffer>
    <experiments>3</experiments>
</comment>
<comment type="interaction">
    <interactant intactId="EBI-12737837">
        <id>Q92851-7</id>
    </interactant>
    <interactant intactId="EBI-1047061">
        <id>O14730</id>
        <label>RIOK3</label>
    </interactant>
    <organismsDiffer>false</organismsDiffer>
    <experiments>3</experiments>
</comment>
<comment type="alternative products">
    <event type="alternative splicing"/>
    <isoform>
        <id>Q92851-1</id>
        <name>A</name>
        <name>10-A</name>
        <sequence type="displayed"/>
    </isoform>
    <isoform>
        <id>Q92851-2</id>
        <name>B</name>
        <name>10-B</name>
        <name>10-S</name>
        <sequence type="described" ref="VSP_000819 VSP_000820"/>
    </isoform>
    <isoform>
        <id>Q92851-4</id>
        <name>D</name>
        <name>10-D</name>
        <name>10-L</name>
        <sequence type="described" ref="VSP_000820"/>
    </isoform>
    <isoform>
        <id>Q92851-3</id>
        <name>C</name>
        <name>10-C</name>
        <sequence type="described" ref="VSP_000821 VSP_000822"/>
    </isoform>
    <isoform>
        <id>Q92851-5</id>
        <name>5</name>
        <sequence type="described" ref="VSP_000819"/>
    </isoform>
    <isoform>
        <id>Q92851-6</id>
        <name>6</name>
        <sequence type="described" ref="VSP_037229 VSP_000820"/>
    </isoform>
    <isoform>
        <id>Q92851-7</id>
        <name>7</name>
        <name>10-G</name>
        <name>10g</name>
        <sequence type="described" ref="VSP_053333 VSP_053334"/>
    </isoform>
</comment>
<comment type="tissue specificity">
    <text>Detectable in most tissues. Lowest expression is seen in brain, kidney, prostate, testis and colon.</text>
</comment>
<comment type="PTM">
    <text>Cleavage by granzyme B and autocatalytic activity generate the two active subunits.</text>
</comment>
<comment type="disease" evidence="5">
    <disease id="DI-00157">
        <name>Autoimmune lymphoproliferative syndrome 2A</name>
        <acronym>ALPS2A</acronym>
        <description>A disorder of apoptosis that manifests in early childhood and results in the accumulation of autoreactive lymphocytes. It is characterized by non-malignant lymphadenopathy with hepatosplenomegaly, and autoimmune hemolytic anemia, thrombocytopenia and neutropenia.</description>
        <dbReference type="MIM" id="603909"/>
    </disease>
    <text>The disease is caused by variants affecting the gene represented in this entry.</text>
</comment>
<comment type="disease" evidence="9">
    <disease id="DI-01594">
        <name>Familial non-Hodgkin lymphoma</name>
        <acronym>NHL</acronym>
        <description>Cancer that starts in cells of the lymph system, which is part of the body's immune system. NHLs can occur at any age and are often marked by enlarged lymph nodes, fever and weight loss.</description>
        <dbReference type="MIM" id="605027"/>
    </disease>
    <text>The gene represented in this entry is involved in disease pathogenesis.</text>
</comment>
<comment type="disease" evidence="8">
    <disease id="DI-02971">
        <name>Gastric cancer</name>
        <acronym>GASC</acronym>
        <description>A malignant disease which starts in the stomach, can spread to the esophagus or the small intestine, and can extend through the stomach wall to nearby lymph nodes and organs. It also can metastasize to other parts of the body. The term gastric cancer or gastric carcinoma refers to adenocarcinoma of the stomach that accounts for most of all gastric malignant tumors. Two main histologic types are recognized, diffuse type and intestinal type carcinomas. Diffuse tumors are poorly differentiated infiltrating lesions, resulting in thickening of the stomach. In contrast, intestinal tumors are usually exophytic, often ulcerating, and associated with intestinal metaplasia of the stomach, most often observed in sporadic disease.</description>
        <dbReference type="MIM" id="613659"/>
    </disease>
    <text>The gene represented in this entry is involved in disease pathogenesis.</text>
</comment>
<comment type="miscellaneous">
    <molecule>Isoform B</molecule>
    <text evidence="25">May be produced at very low levels due to a premature stop codon in the mRNA, leading to nonsense-mediated mRNA decay.</text>
</comment>
<comment type="miscellaneous">
    <molecule>Isoform C</molecule>
    <text evidence="25">May be produced at very low levels due to a premature stop codon in the mRNA, leading to nonsense-mediated mRNA decay.</text>
</comment>
<comment type="similarity">
    <text evidence="25">Belongs to the peptidase C14A family.</text>
</comment>
<comment type="online information" name="CASP10base">
    <link uri="https://databases.lovd.nl/shared/genes/CASP10"/>
    <text>CASP10 mutation db</text>
</comment>
<comment type="online information" name="Autoimmune Lymphoproliferative Syndrome Database (ALPSbase)">
    <link uri="https://www.niaid.nih.gov/diseases-conditions/autoimmune-lymphoproliferative-syndrome-alps"/>
    <text>Caspase-10 mutations causing ALPS type II</text>
</comment>
<evidence type="ECO:0000250" key="1"/>
<evidence type="ECO:0000255" key="2">
    <source>
        <dbReference type="PROSITE-ProRule" id="PRU00065"/>
    </source>
</evidence>
<evidence type="ECO:0000256" key="3">
    <source>
        <dbReference type="SAM" id="MobiDB-lite"/>
    </source>
</evidence>
<evidence type="ECO:0000269" key="4">
    <source>
    </source>
</evidence>
<evidence type="ECO:0000269" key="5">
    <source>
    </source>
</evidence>
<evidence type="ECO:0000269" key="6">
    <source>
    </source>
</evidence>
<evidence type="ECO:0000269" key="7">
    <source>
    </source>
</evidence>
<evidence type="ECO:0000269" key="8">
    <source>
    </source>
</evidence>
<evidence type="ECO:0000269" key="9">
    <source>
    </source>
</evidence>
<evidence type="ECO:0000269" key="10">
    <source>
    </source>
</evidence>
<evidence type="ECO:0000269" key="11">
    <source>
    </source>
</evidence>
<evidence type="ECO:0000269" key="12">
    <source>
    </source>
</evidence>
<evidence type="ECO:0000269" key="13">
    <source>
    </source>
</evidence>
<evidence type="ECO:0000269" key="14">
    <source>
    </source>
</evidence>
<evidence type="ECO:0000269" key="15">
    <source>
    </source>
</evidence>
<evidence type="ECO:0000269" key="16">
    <source>
    </source>
</evidence>
<evidence type="ECO:0000269" key="17">
    <source>
    </source>
</evidence>
<evidence type="ECO:0000269" key="18">
    <source>
    </source>
</evidence>
<evidence type="ECO:0000269" key="19">
    <source>
    </source>
</evidence>
<evidence type="ECO:0000303" key="20">
    <source>
    </source>
</evidence>
<evidence type="ECO:0000303" key="21">
    <source>
    </source>
</evidence>
<evidence type="ECO:0000303" key="22">
    <source>
    </source>
</evidence>
<evidence type="ECO:0000303" key="23">
    <source>
    </source>
</evidence>
<evidence type="ECO:0000303" key="24">
    <source ref="5"/>
</evidence>
<evidence type="ECO:0000305" key="25"/>
<accession>Q92851</accession>
<accession>Q68HC0</accession>
<accession>Q6KF62</accession>
<accession>Q6KF63</accession>
<accession>Q8IUP5</accession>
<accession>Q8WYQ8</accession>
<accession>Q99845</accession>
<accession>Q9Y2U6</accession>
<accession>Q9Y2U7</accession>
<reference key="1">
    <citation type="journal article" date="1996" name="Proc. Natl. Acad. Sci. U.S.A.">
        <title>In vitro activation of CPP32 and Mch3 by Mch4, a novel human apoptotic cysteine protease containing two FADD-like domains.</title>
        <authorList>
            <person name="Fernandes-Alnemri T."/>
            <person name="Armstrong R.C."/>
            <person name="Krebs J.F."/>
            <person name="Srinivasula S.M."/>
            <person name="Wang L."/>
            <person name="Bullrich F."/>
            <person name="Fritz L.C."/>
            <person name="Trapani J.A."/>
            <person name="Tomaselli K.J."/>
            <person name="Litwack G."/>
            <person name="Alnemri E.S."/>
        </authorList>
    </citation>
    <scope>NUCLEOTIDE SEQUENCE [MRNA] (ISOFORM B)</scope>
    <scope>VARIANT ILE-479 (ISOFORM B)</scope>
    <source>
        <tissue>T-cell</tissue>
    </source>
</reference>
<reference key="2">
    <citation type="journal article" date="1997" name="J. Biol. Chem.">
        <title>Fas-associated death domain protein interleukin-1beta-converting enzyme 2 (FLICE2), an ICE/Ced-3 homologue, is proximally involved in CD95- and p55-mediated death signaling.</title>
        <authorList>
            <person name="Vincenz C."/>
            <person name="Dixit V.M."/>
        </authorList>
    </citation>
    <scope>NUCLEOTIDE SEQUENCE [MRNA] (ISOFORM A)</scope>
</reference>
<reference key="3">
    <citation type="journal article" date="1999" name="J. Biol. Chem.">
        <title>Molecular cloning and characterization of two novel pro-apoptotic isoforms of caspase-10.</title>
        <authorList>
            <person name="Ng P.W."/>
            <person name="Porter A.G."/>
            <person name="Janicke R.U."/>
        </authorList>
    </citation>
    <scope>NUCLEOTIDE SEQUENCE [MRNA] (ISOFORMS C AND D)</scope>
    <scope>VARIANT ILE-410</scope>
    <scope>VARIANT ILE-522 (ISOFORM D)</scope>
    <source>
        <tissue>Spleen</tissue>
        <tissue>Thymus</tissue>
    </source>
</reference>
<reference key="4">
    <citation type="journal article" date="2001" name="Genomics">
        <title>Cloning and characterization of three novel genes, ALS2CR1, ALS2CR2, and ALS2CR3, in the juvenile amyotrophic lateral sclerosis (ALS2) critical region at chromosome 2q33-q34: candidate genes for ALS2.</title>
        <authorList>
            <person name="Hadano S."/>
            <person name="Yanagisawa Y."/>
            <person name="Skaug J."/>
            <person name="Fichter K."/>
            <person name="Nasir J."/>
            <person name="Martindale D."/>
            <person name="Koop B.F."/>
            <person name="Scherer S.W."/>
            <person name="Nicholson D.W."/>
            <person name="Rouleau G.A."/>
            <person name="Ikeda J.-E."/>
            <person name="Hayden M.R."/>
        </authorList>
    </citation>
    <scope>NUCLEOTIDE SEQUENCE [GENOMIC DNA]</scope>
    <scope>ALTERNATIVE SPLICING (ISOFORMS A AND B)</scope>
    <scope>VARIANT ILE-479 (ISOFORM B)</scope>
</reference>
<reference key="5">
    <citation type="submission" date="2004-05" db="EMBL/GenBank/DDBJ databases">
        <title>A novel human caspase 10 isoform participating in Fas-induced apoptosis.</title>
        <authorList>
            <person name="Vonarbourg C."/>
            <person name="Fischer A."/>
            <person name="Rieux-Laucat F."/>
        </authorList>
    </citation>
    <scope>NUCLEOTIDE SEQUENCE [MRNA] (ISOFORMS 5 AND 6)</scope>
    <scope>VARIANT ILE-455 (ISOFORM 6)</scope>
    <source>
        <tissue>Blood</tissue>
    </source>
</reference>
<reference key="6">
    <citation type="journal article" date="2007" name="Biochim. Biophys. Acta">
        <title>Cloning and characterization of a novel caspase-10 isoform that activates NF-kappa B activity.</title>
        <authorList>
            <person name="Wang H."/>
            <person name="Wang P."/>
            <person name="Sun X."/>
            <person name="Luo Y."/>
            <person name="Wang X."/>
            <person name="Ma D."/>
            <person name="Wu J."/>
        </authorList>
    </citation>
    <scope>NUCLEOTIDE SEQUENCE [MRNA] (ISOFORM 7)</scope>
    <scope>FUNCTION (ISOFORM 7)</scope>
</reference>
<reference key="7">
    <citation type="submission" date="2006-10" db="EMBL/GenBank/DDBJ databases">
        <authorList>
            <consortium name="NIEHS SNPs program"/>
        </authorList>
    </citation>
    <scope>NUCLEOTIDE SEQUENCE [GENOMIC DNA]</scope>
    <scope>VARIANTS CYS-239; ILE-410; SER-444; CYS-446 AND ILE-522 (ISOFORM 2)</scope>
</reference>
<reference key="8">
    <citation type="journal article" date="2005" name="Nature">
        <title>Generation and annotation of the DNA sequences of human chromosomes 2 and 4.</title>
        <authorList>
            <person name="Hillier L.W."/>
            <person name="Graves T.A."/>
            <person name="Fulton R.S."/>
            <person name="Fulton L.A."/>
            <person name="Pepin K.H."/>
            <person name="Minx P."/>
            <person name="Wagner-McPherson C."/>
            <person name="Layman D."/>
            <person name="Wylie K."/>
            <person name="Sekhon M."/>
            <person name="Becker M.C."/>
            <person name="Fewell G.A."/>
            <person name="Delehaunty K.D."/>
            <person name="Miner T.L."/>
            <person name="Nash W.E."/>
            <person name="Kremitzki C."/>
            <person name="Oddy L."/>
            <person name="Du H."/>
            <person name="Sun H."/>
            <person name="Bradshaw-Cordum H."/>
            <person name="Ali J."/>
            <person name="Carter J."/>
            <person name="Cordes M."/>
            <person name="Harris A."/>
            <person name="Isak A."/>
            <person name="van Brunt A."/>
            <person name="Nguyen C."/>
            <person name="Du F."/>
            <person name="Courtney L."/>
            <person name="Kalicki J."/>
            <person name="Ozersky P."/>
            <person name="Abbott S."/>
            <person name="Armstrong J."/>
            <person name="Belter E.A."/>
            <person name="Caruso L."/>
            <person name="Cedroni M."/>
            <person name="Cotton M."/>
            <person name="Davidson T."/>
            <person name="Desai A."/>
            <person name="Elliott G."/>
            <person name="Erb T."/>
            <person name="Fronick C."/>
            <person name="Gaige T."/>
            <person name="Haakenson W."/>
            <person name="Haglund K."/>
            <person name="Holmes A."/>
            <person name="Harkins R."/>
            <person name="Kim K."/>
            <person name="Kruchowski S.S."/>
            <person name="Strong C.M."/>
            <person name="Grewal N."/>
            <person name="Goyea E."/>
            <person name="Hou S."/>
            <person name="Levy A."/>
            <person name="Martinka S."/>
            <person name="Mead K."/>
            <person name="McLellan M.D."/>
            <person name="Meyer R."/>
            <person name="Randall-Maher J."/>
            <person name="Tomlinson C."/>
            <person name="Dauphin-Kohlberg S."/>
            <person name="Kozlowicz-Reilly A."/>
            <person name="Shah N."/>
            <person name="Swearengen-Shahid S."/>
            <person name="Snider J."/>
            <person name="Strong J.T."/>
            <person name="Thompson J."/>
            <person name="Yoakum M."/>
            <person name="Leonard S."/>
            <person name="Pearman C."/>
            <person name="Trani L."/>
            <person name="Radionenko M."/>
            <person name="Waligorski J.E."/>
            <person name="Wang C."/>
            <person name="Rock S.M."/>
            <person name="Tin-Wollam A.-M."/>
            <person name="Maupin R."/>
            <person name="Latreille P."/>
            <person name="Wendl M.C."/>
            <person name="Yang S.-P."/>
            <person name="Pohl C."/>
            <person name="Wallis J.W."/>
            <person name="Spieth J."/>
            <person name="Bieri T.A."/>
            <person name="Berkowicz N."/>
            <person name="Nelson J.O."/>
            <person name="Osborne J."/>
            <person name="Ding L."/>
            <person name="Meyer R."/>
            <person name="Sabo A."/>
            <person name="Shotland Y."/>
            <person name="Sinha P."/>
            <person name="Wohldmann P.E."/>
            <person name="Cook L.L."/>
            <person name="Hickenbotham M.T."/>
            <person name="Eldred J."/>
            <person name="Williams D."/>
            <person name="Jones T.A."/>
            <person name="She X."/>
            <person name="Ciccarelli F.D."/>
            <person name="Izaurralde E."/>
            <person name="Taylor J."/>
            <person name="Schmutz J."/>
            <person name="Myers R.M."/>
            <person name="Cox D.R."/>
            <person name="Huang X."/>
            <person name="McPherson J.D."/>
            <person name="Mardis E.R."/>
            <person name="Clifton S.W."/>
            <person name="Warren W.C."/>
            <person name="Chinwalla A.T."/>
            <person name="Eddy S.R."/>
            <person name="Marra M.A."/>
            <person name="Ovcharenko I."/>
            <person name="Furey T.S."/>
            <person name="Miller W."/>
            <person name="Eichler E.E."/>
            <person name="Bork P."/>
            <person name="Suyama M."/>
            <person name="Torrents D."/>
            <person name="Waterston R.H."/>
            <person name="Wilson R.K."/>
        </authorList>
    </citation>
    <scope>NUCLEOTIDE SEQUENCE [LARGE SCALE GENOMIC DNA]</scope>
</reference>
<reference key="9">
    <citation type="submission" date="2005-07" db="EMBL/GenBank/DDBJ databases">
        <authorList>
            <person name="Mural R.J."/>
            <person name="Istrail S."/>
            <person name="Sutton G.G."/>
            <person name="Florea L."/>
            <person name="Halpern A.L."/>
            <person name="Mobarry C.M."/>
            <person name="Lippert R."/>
            <person name="Walenz B."/>
            <person name="Shatkay H."/>
            <person name="Dew I."/>
            <person name="Miller J.R."/>
            <person name="Flanigan M.J."/>
            <person name="Edwards N.J."/>
            <person name="Bolanos R."/>
            <person name="Fasulo D."/>
            <person name="Halldorsson B.V."/>
            <person name="Hannenhalli S."/>
            <person name="Turner R."/>
            <person name="Yooseph S."/>
            <person name="Lu F."/>
            <person name="Nusskern D.R."/>
            <person name="Shue B.C."/>
            <person name="Zheng X.H."/>
            <person name="Zhong F."/>
            <person name="Delcher A.L."/>
            <person name="Huson D.H."/>
            <person name="Kravitz S.A."/>
            <person name="Mouchard L."/>
            <person name="Reinert K."/>
            <person name="Remington K.A."/>
            <person name="Clark A.G."/>
            <person name="Waterman M.S."/>
            <person name="Eichler E.E."/>
            <person name="Adams M.D."/>
            <person name="Hunkapiller M.W."/>
            <person name="Myers E.W."/>
            <person name="Venter J.C."/>
        </authorList>
    </citation>
    <scope>NUCLEOTIDE SEQUENCE [LARGE SCALE GENOMIC DNA]</scope>
</reference>
<reference key="10">
    <citation type="journal article" date="2004" name="Genome Res.">
        <title>The status, quality, and expansion of the NIH full-length cDNA project: the Mammalian Gene Collection (MGC).</title>
        <authorList>
            <consortium name="The MGC Project Team"/>
        </authorList>
    </citation>
    <scope>NUCLEOTIDE SEQUENCE [LARGE SCALE MRNA] (ISOFORM D)</scope>
    <source>
        <tissue>Brain</tissue>
    </source>
</reference>
<reference key="11">
    <citation type="journal article" date="1996" name="Proc. Natl. Acad. Sci. U.S.A.">
        <title>Molecular ordering of the Fas-apoptotic pathway: the Fas/APO-1 protease Mch5 is a CrmA-inhibitable protease that activates multiple Ced-3/ICE-like cysteine proteases.</title>
        <authorList>
            <person name="Srinivasula S.M."/>
            <person name="Ahmad M."/>
            <person name="Fernandes-Alnemri T."/>
            <person name="Litwack G."/>
            <person name="Alnemri E.S."/>
        </authorList>
    </citation>
    <scope>PARTIAL PROTEIN SEQUENCE</scope>
    <scope>PROTEOLYTIC PROCESSING</scope>
</reference>
<reference key="12">
    <citation type="journal article" date="2001" name="Proc. Natl. Acad. Sci. U.S.A.">
        <title>Caspase-10 is an initiator caspase in death receptor signaling.</title>
        <authorList>
            <person name="Wang J."/>
            <person name="Chun H.J."/>
            <person name="Wong W."/>
            <person name="Spencer D.M."/>
            <person name="Lenardo M.J."/>
        </authorList>
    </citation>
    <scope>FUNCTION</scope>
    <scope>SELF-ASSOCIATION</scope>
    <scope>INTERACTION WITH FADD</scope>
    <scope>INTERACTION WITH CASP8</scope>
    <scope>IDENTIFICATION IN A COMPLEX WITH FAS; FADD AND CASP8</scope>
    <scope>MUTAGENESIS OF CYS-401</scope>
</reference>
<reference key="13">
    <citation type="journal article" date="2004" name="Genome Biol.">
        <title>An unappreciated role for RNA surveillance.</title>
        <authorList>
            <person name="Hillman R.T."/>
            <person name="Green R.E."/>
            <person name="Brenner S.E."/>
        </authorList>
    </citation>
    <scope>SPLICE ISOFORM(S) THAT ARE POTENTIAL NMD TARGET(S)</scope>
</reference>
<reference key="14">
    <citation type="journal article" date="2004" name="Proc. Natl. Acad. Sci. U.S.A.">
        <title>Suppression of caspase-8- and -10-associated RING proteins results in sensitization to death ligands and inhibition of tumor cell growth.</title>
        <authorList>
            <person name="McDonald E.R. III"/>
            <person name="El-Deiry W.S."/>
        </authorList>
    </citation>
    <scope>INTERACTION WITH RFFL AND RNF34</scope>
</reference>
<reference key="15">
    <citation type="journal article" date="2006" name="Mol. Cell">
        <title>Engineered hybrid dimers: tracking the activation pathway of caspase-7.</title>
        <authorList>
            <person name="Denault J.B."/>
            <person name="Bekes M."/>
            <person name="Scott F.L."/>
            <person name="Sexton K.M."/>
            <person name="Bogyo M."/>
            <person name="Salvesen G.S."/>
        </authorList>
    </citation>
    <scope>FUNCTION</scope>
    <scope>CATALYTIC ACTIVITY</scope>
</reference>
<reference key="16">
    <citation type="journal article" date="2009" name="Mol. Cell. Biochem.">
        <title>RIOK3 interacts with caspase-10 and negatively regulates the NF-kappaB signaling pathway.</title>
        <authorList>
            <person name="Shan J."/>
            <person name="Wang P."/>
            <person name="Zhou J."/>
            <person name="Wu D."/>
            <person name="Shi H."/>
            <person name="Huo K."/>
        </authorList>
    </citation>
    <scope>INTERACTION WITH RIOK3</scope>
</reference>
<reference key="17">
    <citation type="journal article" date="1999" name="Cell">
        <title>Inherited human caspase 10 mutations underlie defective lymphocyte and dendritic cell apoptosis in autoimmune lymphoproliferative syndrome type II.</title>
        <authorList>
            <person name="Wang J."/>
            <person name="Zheng L."/>
            <person name="Lobito A."/>
            <person name="Chan F.K."/>
            <person name="Dale J."/>
            <person name="Sneller M."/>
            <person name="Yao X."/>
            <person name="Puck J.M."/>
            <person name="Straus S.E."/>
            <person name="Lenardo M.J."/>
        </authorList>
    </citation>
    <scope>VARIANT ALPS2A PHE-285</scope>
    <scope>VARIANT ILE-410</scope>
    <scope>ALTERNATIVE SPLICING (ISOFORMS B AND D)</scope>
</reference>
<reference key="18">
    <citation type="journal article" date="2002" name="Blood">
        <title>Inactivating mutations of CASP10 gene in non-Hodgkin lymphomas.</title>
        <authorList>
            <person name="Shin M.S."/>
            <person name="Kim H.S."/>
            <person name="Kang C.S."/>
            <person name="Park W.S."/>
            <person name="Kim S.Y."/>
            <person name="Lee S.N."/>
            <person name="Lee J.H."/>
            <person name="Park J.Y."/>
            <person name="Jang J.J."/>
            <person name="Kim C.W."/>
            <person name="Kim S.H."/>
            <person name="Lee J.Y."/>
            <person name="Yoo N.J."/>
            <person name="Lee S.H."/>
        </authorList>
    </citation>
    <scope>VARIANT NHL VAL-414</scope>
</reference>
<reference key="19">
    <citation type="journal article" date="2002" name="Oncogene">
        <title>Inactivating mutations of the caspase-10 gene in gastric cancer.</title>
        <authorList>
            <person name="Park W.S."/>
            <person name="Lee J.H."/>
            <person name="Shin M.S."/>
            <person name="Park J.Y."/>
            <person name="Kim H.S."/>
            <person name="Lee J.H."/>
            <person name="Kim Y.S."/>
            <person name="Lee S.N."/>
            <person name="Xiao W."/>
            <person name="Park C.H."/>
            <person name="Lee S.H."/>
            <person name="Yoo N.J."/>
            <person name="Lee J.Y."/>
        </authorList>
    </citation>
    <scope>VARIANT GASC THR-147</scope>
    <scope>CHARACTERIZATION OF VARIANT GASC THR-147</scope>
</reference>
<reference key="20">
    <citation type="journal article" date="2006" name="Hum. Genet.">
        <title>Genetic alterations in caspase-10 may be causative or protective in autoimmune lymphoproliferative syndrome.</title>
        <authorList>
            <person name="Zhu S."/>
            <person name="Hsu A.P."/>
            <person name="Vacek M.M."/>
            <person name="Zheng L."/>
            <person name="Schaeffer A.A."/>
            <person name="Dale J.K."/>
            <person name="Davis J."/>
            <person name="Fischer R.E."/>
            <person name="Straus S.E."/>
            <person name="Boruchov D."/>
            <person name="Saulsbury F.T."/>
            <person name="Lenardo M.J."/>
            <person name="Puck J.M."/>
        </authorList>
    </citation>
    <scope>VARIANTS LEU-406; ILE-410 AND CYS-446</scope>
    <scope>CHARACTERIZATION OF VARIANTS LEU-406; ILE-410 AND CYS-446</scope>
</reference>
<reference key="21">
    <citation type="journal article" date="2008" name="Hum. Mutat.">
        <title>Genetic variants and haplotypes of the caspase-8 and caspase-10 genes contribute to susceptibility to cutaneous melanoma.</title>
        <authorList>
            <person name="Li C."/>
            <person name="Zhao H."/>
            <person name="Hu Z."/>
            <person name="Liu Z."/>
            <person name="Wang L.-E."/>
            <person name="Gershenwald J.E."/>
            <person name="Prieto V.G."/>
            <person name="Lee J.E."/>
            <person name="Duvic M."/>
            <person name="Grimm E.A."/>
            <person name="Wei Q."/>
        </authorList>
    </citation>
    <scope>VARIANT ILE-522 (ISOFORM D)</scope>
    <scope>RISK FACTOR FOR CUTANEOUS MELANOMA</scope>
</reference>
<reference key="22">
    <citation type="journal article" date="2009" name="Pathology">
        <title>Mutational analysis of CASP10 gene in acute leukaemias and multiple myelomas.</title>
        <authorList>
            <person name="Kim M.S."/>
            <person name="Oh J.E."/>
            <person name="Min C.K."/>
            <person name="Lee S."/>
            <person name="Chung N.G."/>
            <person name="Yoo N.J."/>
            <person name="Lee S.H."/>
        </authorList>
    </citation>
    <scope>VARIANTS CYS-21 AND PRO-285</scope>
</reference>
<reference key="23">
    <citation type="journal article" date="2010" name="Pathology">
        <title>Mutational analysis of CASP10 gene in colon, breast, lung and hepatocellular carcinomas.</title>
        <authorList>
            <person name="Oh J.E."/>
            <person name="Kim M.S."/>
            <person name="Ahn C.H."/>
            <person name="Kim S.S."/>
            <person name="Han J.Y."/>
            <person name="Lee S.H."/>
            <person name="Yoo N.J."/>
        </authorList>
    </citation>
    <scope>VARIANT THR-14</scope>
</reference>
<reference key="24">
    <citation type="journal article" date="2016" name="Immunol. Lett.">
        <title>Atypical presentation of autoimmune lymphoproliferative syndrome due to CASP10 mutation.</title>
        <authorList>
            <person name="Tripodi S.I."/>
            <person name="Mazza C."/>
            <person name="Moratto D."/>
            <person name="Ramenghi U."/>
            <person name="Caorsi R."/>
            <person name="Gattorno M."/>
            <person name="Badolato R."/>
        </authorList>
    </citation>
    <scope>VARIANT LEU-406</scope>
</reference>
<reference key="25">
    <citation type="journal article" date="2016" name="Nature">
        <title>Analysis of protein-coding genetic variation in 60,706 humans.</title>
        <authorList>
            <consortium name="Exome Aggregation Consortium"/>
            <person name="Lek M."/>
            <person name="Karczewski K.J."/>
            <person name="Minikel E.V."/>
            <person name="Samocha K.E."/>
            <person name="Banks E."/>
            <person name="Fennell T."/>
            <person name="O'Donnell-Luria A.H."/>
            <person name="Ware J.S."/>
            <person name="Hill A.J."/>
            <person name="Cummings B.B."/>
            <person name="Tukiainen T."/>
            <person name="Birnbaum D.P."/>
            <person name="Kosmicki J.A."/>
            <person name="Duncan L.E."/>
            <person name="Estrada K."/>
            <person name="Zhao F."/>
            <person name="Zou J."/>
            <person name="Pierce-Hoffman E."/>
            <person name="Berghout J."/>
            <person name="Cooper D.N."/>
            <person name="Deflaux N."/>
            <person name="DePristo M."/>
            <person name="Do R."/>
            <person name="Flannick J."/>
            <person name="Fromer M."/>
            <person name="Gauthier L."/>
            <person name="Goldstein J."/>
            <person name="Gupta N."/>
            <person name="Howrigan D."/>
            <person name="Kiezun A."/>
            <person name="Kurki M.I."/>
            <person name="Moonshine A.L."/>
            <person name="Natarajan P."/>
            <person name="Orozco L."/>
            <person name="Peloso G.M."/>
            <person name="Poplin R."/>
            <person name="Rivas M.A."/>
            <person name="Ruano-Rubio V."/>
            <person name="Rose S.A."/>
            <person name="Ruderfer D.M."/>
            <person name="Shakir K."/>
            <person name="Stenson P.D."/>
            <person name="Stevens C."/>
            <person name="Thomas B.P."/>
            <person name="Tiao G."/>
            <person name="Tusie-Luna M.T."/>
            <person name="Weisburd B."/>
            <person name="Won H.H."/>
            <person name="Yu D."/>
            <person name="Altshuler D.M."/>
            <person name="Ardissino D."/>
            <person name="Boehnke M."/>
            <person name="Danesh J."/>
            <person name="Donnelly S."/>
            <person name="Elosua R."/>
            <person name="Florez J.C."/>
            <person name="Gabriel S.B."/>
            <person name="Getz G."/>
            <person name="Glatt S.J."/>
            <person name="Hultman C.M."/>
            <person name="Kathiresan S."/>
            <person name="Laakso M."/>
            <person name="McCarroll S."/>
            <person name="McCarthy M.I."/>
            <person name="McGovern D."/>
            <person name="McPherson R."/>
            <person name="Neale B.M."/>
            <person name="Palotie A."/>
            <person name="Purcell S.M."/>
            <person name="Saleheen D."/>
            <person name="Scharf J.M."/>
            <person name="Sklar P."/>
            <person name="Sullivan P.F."/>
            <person name="Tuomilehto J."/>
            <person name="Tsuang M.T."/>
            <person name="Watkins H.C."/>
            <person name="Wilson J.G."/>
            <person name="Daly M.J."/>
            <person name="MacArthur D.G."/>
        </authorList>
    </citation>
    <scope>VARIANT LEU-406</scope>
</reference>
<protein>
    <recommendedName>
        <fullName>Caspase-10</fullName>
        <shortName>CASP-10</shortName>
        <ecNumber evidence="12">3.4.22.63</ecNumber>
    </recommendedName>
    <alternativeName>
        <fullName>Apoptotic protease Mch-4</fullName>
    </alternativeName>
    <alternativeName>
        <fullName>FAS-associated death domain protein interleukin-1B-converting enzyme 2</fullName>
        <shortName>FLICE2</shortName>
    </alternativeName>
    <alternativeName>
        <fullName>ICE-like apoptotic protease 4</fullName>
    </alternativeName>
    <component>
        <recommendedName>
            <fullName>Caspase-10 subunit p23/17</fullName>
        </recommendedName>
    </component>
    <component>
        <recommendedName>
            <fullName>Caspase-10 subunit p12</fullName>
        </recommendedName>
    </component>
</protein>
<dbReference type="EC" id="3.4.22.63" evidence="12"/>
<dbReference type="EMBL" id="U60519">
    <property type="protein sequence ID" value="AAC50644.1"/>
    <property type="molecule type" value="mRNA"/>
</dbReference>
<dbReference type="EMBL" id="U86214">
    <property type="protein sequence ID" value="AAB46730.1"/>
    <property type="molecule type" value="mRNA"/>
</dbReference>
<dbReference type="EMBL" id="AF111344">
    <property type="protein sequence ID" value="AAD28402.1"/>
    <property type="molecule type" value="mRNA"/>
</dbReference>
<dbReference type="EMBL" id="AF111345">
    <property type="protein sequence ID" value="AAD28403.1"/>
    <property type="molecule type" value="mRNA"/>
</dbReference>
<dbReference type="EMBL" id="AB038979">
    <property type="protein sequence ID" value="BAB32553.1"/>
    <property type="molecule type" value="Genomic_DNA"/>
</dbReference>
<dbReference type="EMBL" id="AB038979">
    <property type="protein sequence ID" value="BAB32554.1"/>
    <property type="molecule type" value="Genomic_DNA"/>
</dbReference>
<dbReference type="EMBL" id="AJ487678">
    <property type="protein sequence ID" value="CAD32371.1"/>
    <property type="molecule type" value="mRNA"/>
</dbReference>
<dbReference type="EMBL" id="AJ487679">
    <property type="protein sequence ID" value="CAD32372.1"/>
    <property type="molecule type" value="mRNA"/>
</dbReference>
<dbReference type="EMBL" id="AY690601">
    <property type="protein sequence ID" value="AAU00989.1"/>
    <property type="molecule type" value="mRNA"/>
</dbReference>
<dbReference type="EMBL" id="EF050529">
    <property type="protein sequence ID" value="ABJ53426.1"/>
    <property type="molecule type" value="Genomic_DNA"/>
</dbReference>
<dbReference type="EMBL" id="AC007283">
    <property type="protein sequence ID" value="AAY24291.1"/>
    <property type="molecule type" value="Genomic_DNA"/>
</dbReference>
<dbReference type="EMBL" id="CH471063">
    <property type="protein sequence ID" value="EAW70248.1"/>
    <property type="molecule type" value="Genomic_DNA"/>
</dbReference>
<dbReference type="EMBL" id="CH471063">
    <property type="protein sequence ID" value="EAW70249.1"/>
    <property type="molecule type" value="Genomic_DNA"/>
</dbReference>
<dbReference type="EMBL" id="BC042844">
    <property type="protein sequence ID" value="AAH42844.1"/>
    <property type="molecule type" value="mRNA"/>
</dbReference>
<dbReference type="CCDS" id="CCDS2338.1">
    <molecule id="Q92851-1"/>
</dbReference>
<dbReference type="CCDS" id="CCDS2339.1">
    <molecule id="Q92851-2"/>
</dbReference>
<dbReference type="CCDS" id="CCDS2340.1">
    <molecule id="Q92851-4"/>
</dbReference>
<dbReference type="CCDS" id="CCDS56159.1">
    <molecule id="Q92851-6"/>
</dbReference>
<dbReference type="CCDS" id="CCDS56160.1">
    <molecule id="Q92851-5"/>
</dbReference>
<dbReference type="CCDS" id="CCDS77506.1">
    <molecule id="Q92851-7"/>
</dbReference>
<dbReference type="RefSeq" id="NP_001193453.1">
    <molecule id="Q92851-6"/>
    <property type="nucleotide sequence ID" value="NM_001206524.2"/>
</dbReference>
<dbReference type="RefSeq" id="NP_001193471.1">
    <molecule id="Q92851-5"/>
    <property type="nucleotide sequence ID" value="NM_001206542.2"/>
</dbReference>
<dbReference type="RefSeq" id="NP_001221.2">
    <molecule id="Q92851-2"/>
    <property type="nucleotide sequence ID" value="NM_001230.4"/>
</dbReference>
<dbReference type="RefSeq" id="NP_001293012.1">
    <molecule id="Q92851-7"/>
    <property type="nucleotide sequence ID" value="NM_001306083.2"/>
</dbReference>
<dbReference type="RefSeq" id="NP_116756.2">
    <molecule id="Q92851-1"/>
    <property type="nucleotide sequence ID" value="NM_032974.4"/>
</dbReference>
<dbReference type="RefSeq" id="NP_116758.1">
    <molecule id="Q92851-3"/>
    <property type="nucleotide sequence ID" value="NM_032976.4"/>
</dbReference>
<dbReference type="RefSeq" id="NP_116759.2">
    <molecule id="Q92851-4"/>
    <property type="nucleotide sequence ID" value="NM_032977.3"/>
</dbReference>
<dbReference type="SMR" id="Q92851"/>
<dbReference type="BioGRID" id="107293">
    <property type="interactions" value="96"/>
</dbReference>
<dbReference type="CORUM" id="Q92851"/>
<dbReference type="FunCoup" id="Q92851">
    <property type="interactions" value="364"/>
</dbReference>
<dbReference type="IntAct" id="Q92851">
    <property type="interactions" value="24"/>
</dbReference>
<dbReference type="MINT" id="Q92851"/>
<dbReference type="STRING" id="9606.ENSP00000286186"/>
<dbReference type="BindingDB" id="Q92851"/>
<dbReference type="ChEMBL" id="CHEMBL5037"/>
<dbReference type="MEROPS" id="C14.011"/>
<dbReference type="iPTMnet" id="Q92851"/>
<dbReference type="PhosphoSitePlus" id="Q92851"/>
<dbReference type="BioMuta" id="CASP10"/>
<dbReference type="DMDM" id="12644463"/>
<dbReference type="CPTAC" id="CPTAC-1039"/>
<dbReference type="jPOST" id="Q92851"/>
<dbReference type="MassIVE" id="Q92851"/>
<dbReference type="PaxDb" id="9606-ENSP00000286186"/>
<dbReference type="PeptideAtlas" id="Q92851"/>
<dbReference type="ProteomicsDB" id="66146"/>
<dbReference type="ProteomicsDB" id="75543">
    <molecule id="Q92851-1"/>
</dbReference>
<dbReference type="ProteomicsDB" id="75544">
    <molecule id="Q92851-2"/>
</dbReference>
<dbReference type="ProteomicsDB" id="75545">
    <molecule id="Q92851-3"/>
</dbReference>
<dbReference type="ProteomicsDB" id="75546">
    <molecule id="Q92851-4"/>
</dbReference>
<dbReference type="ProteomicsDB" id="75547">
    <molecule id="Q92851-5"/>
</dbReference>
<dbReference type="ProteomicsDB" id="75548">
    <molecule id="Q92851-6"/>
</dbReference>
<dbReference type="Pumba" id="Q92851"/>
<dbReference type="Antibodypedia" id="1700">
    <property type="antibodies" value="588 antibodies from 46 providers"/>
</dbReference>
<dbReference type="DNASU" id="843"/>
<dbReference type="Ensembl" id="ENST00000272879.9">
    <molecule id="Q92851-1"/>
    <property type="protein sequence ID" value="ENSP00000272879.5"/>
    <property type="gene ID" value="ENSG00000003400.16"/>
</dbReference>
<dbReference type="Ensembl" id="ENST00000286186.11">
    <molecule id="Q92851-4"/>
    <property type="protein sequence ID" value="ENSP00000286186.6"/>
    <property type="gene ID" value="ENSG00000003400.16"/>
</dbReference>
<dbReference type="Ensembl" id="ENST00000313728.12">
    <molecule id="Q92851-6"/>
    <property type="protein sequence ID" value="ENSP00000314599.7"/>
    <property type="gene ID" value="ENSG00000003400.16"/>
</dbReference>
<dbReference type="Ensembl" id="ENST00000346817.10">
    <molecule id="Q92851-2"/>
    <property type="protein sequence ID" value="ENSP00000237865.7"/>
    <property type="gene ID" value="ENSG00000003400.16"/>
</dbReference>
<dbReference type="Ensembl" id="ENST00000374650.8">
    <molecule id="Q92851-7"/>
    <property type="protein sequence ID" value="ENSP00000363781.3"/>
    <property type="gene ID" value="ENSG00000003400.16"/>
</dbReference>
<dbReference type="Ensembl" id="ENST00000448480.1">
    <molecule id="Q92851-5"/>
    <property type="protein sequence ID" value="ENSP00000396835.1"/>
    <property type="gene ID" value="ENSG00000003400.16"/>
</dbReference>
<dbReference type="Ensembl" id="ENST00000492363.6">
    <molecule id="Q92851-3"/>
    <property type="protein sequence ID" value="ENSP00000512459.1"/>
    <property type="gene ID" value="ENSG00000003400.16"/>
</dbReference>
<dbReference type="GeneID" id="843"/>
<dbReference type="KEGG" id="hsa:843"/>
<dbReference type="MANE-Select" id="ENST00000286186.11">
    <molecule id="Q92851-4"/>
    <property type="protein sequence ID" value="ENSP00000286186.6"/>
    <property type="RefSeq nucleotide sequence ID" value="NM_032977.4"/>
    <property type="RefSeq protein sequence ID" value="NP_116759.2"/>
</dbReference>
<dbReference type="UCSC" id="uc002uxi.2">
    <molecule id="Q92851-1"/>
    <property type="organism name" value="human"/>
</dbReference>
<dbReference type="AGR" id="HGNC:1500"/>
<dbReference type="CTD" id="843"/>
<dbReference type="DisGeNET" id="843"/>
<dbReference type="GeneCards" id="CASP10"/>
<dbReference type="GeneReviews" id="CASP10"/>
<dbReference type="HGNC" id="HGNC:1500">
    <property type="gene designation" value="CASP10"/>
</dbReference>
<dbReference type="HPA" id="ENSG00000003400">
    <property type="expression patterns" value="Low tissue specificity"/>
</dbReference>
<dbReference type="MalaCards" id="CASP10"/>
<dbReference type="MIM" id="601762">
    <property type="type" value="gene"/>
</dbReference>
<dbReference type="MIM" id="603909">
    <property type="type" value="phenotype"/>
</dbReference>
<dbReference type="MIM" id="605027">
    <property type="type" value="phenotype"/>
</dbReference>
<dbReference type="MIM" id="613659">
    <property type="type" value="phenotype"/>
</dbReference>
<dbReference type="neXtProt" id="NX_Q92851"/>
<dbReference type="OpenTargets" id="ENSG00000003400"/>
<dbReference type="Orphanet" id="3261">
    <property type="disease" value="Autoimmune lymphoproliferative syndrome"/>
</dbReference>
<dbReference type="PharmGKB" id="PA26084"/>
<dbReference type="VEuPathDB" id="HostDB:ENSG00000003400"/>
<dbReference type="eggNOG" id="KOG3573">
    <property type="taxonomic scope" value="Eukaryota"/>
</dbReference>
<dbReference type="GeneTree" id="ENSGT00940000160994"/>
<dbReference type="HOGENOM" id="CLU_088972_0_0_1"/>
<dbReference type="InParanoid" id="Q92851"/>
<dbReference type="OMA" id="CRDCISH"/>
<dbReference type="OrthoDB" id="6114029at2759"/>
<dbReference type="PAN-GO" id="Q92851">
    <property type="GO annotations" value="6 GO annotations based on evolutionary models"/>
</dbReference>
<dbReference type="PhylomeDB" id="Q92851"/>
<dbReference type="TreeFam" id="TF102023"/>
<dbReference type="BioCyc" id="MetaCyc:HS00093-MONOMER"/>
<dbReference type="BRENDA" id="3.4.22.63">
    <property type="organism ID" value="2681"/>
</dbReference>
<dbReference type="PathwayCommons" id="Q92851"/>
<dbReference type="Reactome" id="R-HSA-6803207">
    <property type="pathway name" value="TP53 Regulates Transcription of Caspase Activators and Caspases"/>
</dbReference>
<dbReference type="Reactome" id="R-HSA-75157">
    <property type="pathway name" value="FasL/ CD95L signaling"/>
</dbReference>
<dbReference type="Reactome" id="R-HSA-75158">
    <property type="pathway name" value="TRAIL signaling"/>
</dbReference>
<dbReference type="Reactome" id="R-HSA-933543">
    <property type="pathway name" value="NF-kB activation through FADD/RIP-1 pathway mediated by caspase-8 and -10"/>
</dbReference>
<dbReference type="SignaLink" id="Q92851"/>
<dbReference type="SIGNOR" id="Q92851"/>
<dbReference type="BioGRID-ORCS" id="843">
    <property type="hits" value="6 hits in 1156 CRISPR screens"/>
</dbReference>
<dbReference type="ChiTaRS" id="CASP10">
    <property type="organism name" value="human"/>
</dbReference>
<dbReference type="GeneWiki" id="Caspase_10"/>
<dbReference type="GenomeRNAi" id="843"/>
<dbReference type="Pharos" id="Q92851">
    <property type="development level" value="Tchem"/>
</dbReference>
<dbReference type="PRO" id="PR:Q92851"/>
<dbReference type="Proteomes" id="UP000005640">
    <property type="component" value="Chromosome 2"/>
</dbReference>
<dbReference type="RNAct" id="Q92851">
    <property type="molecule type" value="protein"/>
</dbReference>
<dbReference type="Bgee" id="ENSG00000003400">
    <property type="expression patterns" value="Expressed in colonic epithelium and 126 other cell types or tissues"/>
</dbReference>
<dbReference type="ExpressionAtlas" id="Q92851">
    <property type="expression patterns" value="baseline and differential"/>
</dbReference>
<dbReference type="GO" id="GO:0031265">
    <property type="term" value="C:CD95 death-inducing signaling complex"/>
    <property type="evidence" value="ECO:0000314"/>
    <property type="project" value="UniProtKB"/>
</dbReference>
<dbReference type="GO" id="GO:0005737">
    <property type="term" value="C:cytoplasm"/>
    <property type="evidence" value="ECO:0000318"/>
    <property type="project" value="GO_Central"/>
</dbReference>
<dbReference type="GO" id="GO:0005829">
    <property type="term" value="C:cytosol"/>
    <property type="evidence" value="ECO:0000304"/>
    <property type="project" value="Reactome"/>
</dbReference>
<dbReference type="GO" id="GO:0097342">
    <property type="term" value="C:ripoptosome"/>
    <property type="evidence" value="ECO:0000314"/>
    <property type="project" value="UniProtKB"/>
</dbReference>
<dbReference type="GO" id="GO:0004197">
    <property type="term" value="F:cysteine-type endopeptidase activity"/>
    <property type="evidence" value="ECO:0000314"/>
    <property type="project" value="UniProtKB"/>
</dbReference>
<dbReference type="GO" id="GO:0035877">
    <property type="term" value="F:death effector domain binding"/>
    <property type="evidence" value="ECO:0000353"/>
    <property type="project" value="UniProtKB"/>
</dbReference>
<dbReference type="GO" id="GO:0031625">
    <property type="term" value="F:ubiquitin protein ligase binding"/>
    <property type="evidence" value="ECO:0000353"/>
    <property type="project" value="UniProtKB"/>
</dbReference>
<dbReference type="GO" id="GO:0006915">
    <property type="term" value="P:apoptotic process"/>
    <property type="evidence" value="ECO:0000318"/>
    <property type="project" value="GO_Central"/>
</dbReference>
<dbReference type="GO" id="GO:0043123">
    <property type="term" value="P:positive regulation of canonical NF-kappaB signal transduction"/>
    <property type="evidence" value="ECO:0000315"/>
    <property type="project" value="UniProtKB"/>
</dbReference>
<dbReference type="GO" id="GO:1900119">
    <property type="term" value="P:positive regulation of execution phase of apoptosis"/>
    <property type="evidence" value="ECO:0000314"/>
    <property type="project" value="UniProt"/>
</dbReference>
<dbReference type="GO" id="GO:0043525">
    <property type="term" value="P:positive regulation of neuron apoptotic process"/>
    <property type="evidence" value="ECO:0000318"/>
    <property type="project" value="GO_Central"/>
</dbReference>
<dbReference type="GO" id="GO:0051604">
    <property type="term" value="P:protein maturation"/>
    <property type="evidence" value="ECO:0000314"/>
    <property type="project" value="UniProt"/>
</dbReference>
<dbReference type="GO" id="GO:0006508">
    <property type="term" value="P:proteolysis"/>
    <property type="evidence" value="ECO:0007669"/>
    <property type="project" value="UniProtKB-KW"/>
</dbReference>
<dbReference type="CDD" id="cd00032">
    <property type="entry name" value="CASc"/>
    <property type="match status" value="1"/>
</dbReference>
<dbReference type="CDD" id="cd08341">
    <property type="entry name" value="DED_Caspase_10_r1"/>
    <property type="match status" value="1"/>
</dbReference>
<dbReference type="CDD" id="cd08814">
    <property type="entry name" value="DED_Caspase_10_r2"/>
    <property type="match status" value="1"/>
</dbReference>
<dbReference type="FunFam" id="1.10.533.10:FF:000038">
    <property type="entry name" value="Caspase 10"/>
    <property type="match status" value="1"/>
</dbReference>
<dbReference type="FunFam" id="1.10.533.10:FF:000070">
    <property type="entry name" value="Caspase 10"/>
    <property type="match status" value="1"/>
</dbReference>
<dbReference type="FunFam" id="3.40.50.1460:FF:000014">
    <property type="entry name" value="Caspase 10, apoptosis-related cysteine peptidase"/>
    <property type="match status" value="1"/>
</dbReference>
<dbReference type="Gene3D" id="3.40.50.1460">
    <property type="match status" value="1"/>
</dbReference>
<dbReference type="Gene3D" id="1.10.533.10">
    <property type="entry name" value="Death Domain, Fas"/>
    <property type="match status" value="2"/>
</dbReference>
<dbReference type="InterPro" id="IPR035701">
    <property type="entry name" value="CASP10_DED2"/>
</dbReference>
<dbReference type="InterPro" id="IPR029030">
    <property type="entry name" value="Caspase-like_dom_sf"/>
</dbReference>
<dbReference type="InterPro" id="IPR033139">
    <property type="entry name" value="Caspase_cys_AS"/>
</dbReference>
<dbReference type="InterPro" id="IPR016129">
    <property type="entry name" value="Caspase_his_AS"/>
</dbReference>
<dbReference type="InterPro" id="IPR011029">
    <property type="entry name" value="DEATH-like_dom_sf"/>
</dbReference>
<dbReference type="InterPro" id="IPR001875">
    <property type="entry name" value="DED_dom"/>
</dbReference>
<dbReference type="InterPro" id="IPR011600">
    <property type="entry name" value="Pept_C14_caspase"/>
</dbReference>
<dbReference type="InterPro" id="IPR002138">
    <property type="entry name" value="Pept_C14_p10"/>
</dbReference>
<dbReference type="InterPro" id="IPR001309">
    <property type="entry name" value="Pept_C14_p20"/>
</dbReference>
<dbReference type="InterPro" id="IPR015917">
    <property type="entry name" value="Pept_C14A"/>
</dbReference>
<dbReference type="PANTHER" id="PTHR48169:SF7">
    <property type="entry name" value="CASPASE 10"/>
    <property type="match status" value="1"/>
</dbReference>
<dbReference type="PANTHER" id="PTHR48169">
    <property type="entry name" value="DED DOMAIN-CONTAINING PROTEIN"/>
    <property type="match status" value="1"/>
</dbReference>
<dbReference type="Pfam" id="PF01335">
    <property type="entry name" value="DED"/>
    <property type="match status" value="2"/>
</dbReference>
<dbReference type="Pfam" id="PF00656">
    <property type="entry name" value="Peptidase_C14"/>
    <property type="match status" value="1"/>
</dbReference>
<dbReference type="PRINTS" id="PR00376">
    <property type="entry name" value="IL1BCENZYME"/>
</dbReference>
<dbReference type="SMART" id="SM00115">
    <property type="entry name" value="CASc"/>
    <property type="match status" value="1"/>
</dbReference>
<dbReference type="SMART" id="SM00031">
    <property type="entry name" value="DED"/>
    <property type="match status" value="2"/>
</dbReference>
<dbReference type="SUPFAM" id="SSF52129">
    <property type="entry name" value="Caspase-like"/>
    <property type="match status" value="1"/>
</dbReference>
<dbReference type="SUPFAM" id="SSF47986">
    <property type="entry name" value="DEATH domain"/>
    <property type="match status" value="2"/>
</dbReference>
<dbReference type="PROSITE" id="PS01122">
    <property type="entry name" value="CASPASE_CYS"/>
    <property type="match status" value="1"/>
</dbReference>
<dbReference type="PROSITE" id="PS01121">
    <property type="entry name" value="CASPASE_HIS"/>
    <property type="match status" value="1"/>
</dbReference>
<dbReference type="PROSITE" id="PS50207">
    <property type="entry name" value="CASPASE_P10"/>
    <property type="match status" value="1"/>
</dbReference>
<dbReference type="PROSITE" id="PS50208">
    <property type="entry name" value="CASPASE_P20"/>
    <property type="match status" value="1"/>
</dbReference>
<dbReference type="PROSITE" id="PS50168">
    <property type="entry name" value="DED"/>
    <property type="match status" value="2"/>
</dbReference>
<gene>
    <name type="primary">CASP10</name>
    <name type="synonym">MCH4</name>
</gene>
<keyword id="KW-0025">Alternative splicing</keyword>
<keyword id="KW-0053">Apoptosis</keyword>
<keyword id="KW-0903">Direct protein sequencing</keyword>
<keyword id="KW-0225">Disease variant</keyword>
<keyword id="KW-0378">Hydrolase</keyword>
<keyword id="KW-0645">Protease</keyword>
<keyword id="KW-1267">Proteomics identification</keyword>
<keyword id="KW-1185">Reference proteome</keyword>
<keyword id="KW-0677">Repeat</keyword>
<keyword id="KW-0788">Thiol protease</keyword>
<keyword id="KW-0865">Zymogen</keyword>
<feature type="propeptide" id="PRO_0000004644">
    <location>
        <begin position="1"/>
        <end position="219"/>
    </location>
</feature>
<feature type="chain" id="PRO_0000004645" description="Caspase-10 subunit p23/17">
    <location>
        <begin position="220"/>
        <end position="415"/>
    </location>
</feature>
<feature type="chain" id="PRO_0000004646" description="Caspase-10 subunit p12">
    <location>
        <begin position="416"/>
        <end position="521"/>
    </location>
</feature>
<feature type="domain" description="DED 1" evidence="2">
    <location>
        <begin position="19"/>
        <end position="97"/>
    </location>
</feature>
<feature type="domain" description="DED 2" evidence="2">
    <location>
        <begin position="114"/>
        <end position="187"/>
    </location>
</feature>
<feature type="region of interest" description="Disordered" evidence="3">
    <location>
        <begin position="231"/>
        <end position="269"/>
    </location>
</feature>
<feature type="compositionally biased region" description="Polar residues" evidence="3">
    <location>
        <begin position="231"/>
        <end position="248"/>
    </location>
</feature>
<feature type="compositionally biased region" description="Polar residues" evidence="3">
    <location>
        <begin position="259"/>
        <end position="268"/>
    </location>
</feature>
<feature type="active site" evidence="1">
    <location>
        <position position="358"/>
    </location>
</feature>
<feature type="active site" evidence="1">
    <location>
        <position position="401"/>
    </location>
</feature>
<feature type="splice variant" id="VSP_000819" description="In isoform B and isoform 5." evidence="23 24">
    <location>
        <begin position="229"/>
        <end position="271"/>
    </location>
</feature>
<feature type="splice variant" id="VSP_053333" description="In isoform 7." evidence="22">
    <original>QESWQNKHAGSNGNRATNG</original>
    <variation>EGVFVFLNEGDRGNSPDDL</variation>
    <location>
        <begin position="229"/>
        <end position="247"/>
    </location>
</feature>
<feature type="splice variant" id="VSP_037229" description="In isoform 6." evidence="24">
    <location>
        <begin position="241"/>
        <end position="307"/>
    </location>
</feature>
<feature type="splice variant" id="VSP_000821" description="In isoform C." evidence="20">
    <original>GNRATNGAPSLVSRGMQGASANTLNSETSTKRA</original>
    <variation>EGSCVQDESEPQRPLCHCQQPQLYLPEGQTRNP</variation>
    <location>
        <begin position="241"/>
        <end position="273"/>
    </location>
</feature>
<feature type="splice variant" id="VSP_053334" description="In isoform 7." evidence="22">
    <location>
        <begin position="248"/>
        <end position="521"/>
    </location>
</feature>
<feature type="splice variant" id="VSP_000822" description="In isoform C." evidence="20">
    <location>
        <begin position="274"/>
        <end position="521"/>
    </location>
</feature>
<feature type="splice variant" id="VSP_000820" description="In isoform B, isoform D and isoform 6." evidence="20 21 23 24">
    <original>MLKFLEKTMEIRGRKRTVWGAKQISATSLPTAISAQTPRPPMRRWSSVS</original>
    <variation>HEDILSILTAVNDDVSRRVDKQGTKKQMPQPAFTLRKKLVFPVPLDALSL</variation>
    <location>
        <begin position="473"/>
        <end position="521"/>
    </location>
</feature>
<feature type="sequence variant" id="VAR_065233" description="Found in a colon cancer sample; somatic mutation." evidence="16">
    <original>K</original>
    <variation>T</variation>
    <location>
        <position position="14"/>
    </location>
</feature>
<feature type="sequence variant" id="VAR_065234" description="Found in a multiple myeloma sample; somatic mutation; dbSNP:rs559979934." evidence="15">
    <original>R</original>
    <variation>C</variation>
    <location>
        <position position="21"/>
    </location>
</feature>
<feature type="sequence variant" id="VAR_037428" description="In GASC; somatic mutation; impairs CASP10-mediated apoptosis; dbSNP:rs121909776." evidence="8">
    <original>M</original>
    <variation>T</variation>
    <location>
        <position position="147"/>
    </location>
</feature>
<feature type="sequence variant" id="VAR_055361" description="In dbSNP:rs41473647.">
    <original>S</original>
    <variation>C</variation>
    <location>
        <position position="239"/>
    </location>
</feature>
<feature type="sequence variant" id="VAR_014071" description="In ALPS2A; dbSNP:rs17860403." evidence="5">
    <original>L</original>
    <variation>F</variation>
    <location>
        <position position="285"/>
    </location>
</feature>
<feature type="sequence variant" id="VAR_065235" description="Found in a T-acute lymphoblastic leukemia sample; somatic mutation." evidence="15">
    <original>L</original>
    <variation>P</variation>
    <location>
        <position position="285"/>
    </location>
</feature>
<feature type="sequence variant" id="VAR_037429" description="The mutant protein has defective apoptosis and exerts a dominant-negative effect when cotransfected with the wild-type protein; dbSNP:rs80358239." evidence="11 17 18">
    <original>I</original>
    <variation>L</variation>
    <location>
        <position position="406"/>
    </location>
</feature>
<feature type="sequence variant" id="VAR_014072" description="Does not interfere with apoptosis in a dominant negative manner; dbSNP:rs13010627." evidence="4 5 11">
    <original>V</original>
    <variation>I</variation>
    <location>
        <position position="410"/>
    </location>
</feature>
<feature type="sequence variant" id="VAR_037430" description="In NHL; somatic mutation; dbSNP:rs28936699." evidence="9">
    <original>A</original>
    <variation>V</variation>
    <location>
        <position position="414"/>
    </location>
</feature>
<feature type="sequence variant" id="VAR_055362" description="In dbSNP:rs41513147.">
    <original>P</original>
    <variation>S</variation>
    <location>
        <position position="444"/>
    </location>
</feature>
<feature type="sequence variant" id="VAR_037431" description="Risk factor for ALPS2A; does not interfere with apoptosis in a dominant negative manner; dbSNP:rs17860405." evidence="11">
    <original>Y</original>
    <variation>C</variation>
    <location>
        <position position="446"/>
    </location>
</feature>
<feature type="mutagenesis site" description="Abolishes proteolytic activity." evidence="7">
    <original>C</original>
    <variation>A</variation>
    <location>
        <position position="401"/>
    </location>
</feature>
<feature type="sequence conflict" description="In Ref. 2; AAB46730." evidence="25" ref="2">
    <original>E</original>
    <variation>G</variation>
    <location>
        <position position="68"/>
    </location>
</feature>
<feature type="sequence conflict" description="In Ref. 3; AAD28403." evidence="25" ref="3">
    <original>T</original>
    <variation>A</variation>
    <location>
        <position position="268"/>
    </location>
</feature>
<feature type="sequence variant" id="VAR_082802" description="In dbSNP:rs13006529." evidence="6 19">
    <original>L</original>
    <variation>I</variation>
    <location sequence="Q92851-2">
        <position position="479"/>
    </location>
</feature>
<feature type="sequence variant" id="VAR_082803" description="In dbSNP:rs13006529." evidence="25">
    <original>L</original>
    <variation>I</variation>
    <location sequence="Q92851-4">
        <position position="522"/>
    </location>
</feature>
<feature type="sequence variant" id="VAR_082804" description="In dbSNP:rs13006529." evidence="25">
    <original>L</original>
    <variation>I</variation>
    <location sequence="Q92851-6">
        <position position="455"/>
    </location>
</feature>
<organism>
    <name type="scientific">Homo sapiens</name>
    <name type="common">Human</name>
    <dbReference type="NCBI Taxonomy" id="9606"/>
    <lineage>
        <taxon>Eukaryota</taxon>
        <taxon>Metazoa</taxon>
        <taxon>Chordata</taxon>
        <taxon>Craniata</taxon>
        <taxon>Vertebrata</taxon>
        <taxon>Euteleostomi</taxon>
        <taxon>Mammalia</taxon>
        <taxon>Eutheria</taxon>
        <taxon>Euarchontoglires</taxon>
        <taxon>Primates</taxon>
        <taxon>Haplorrhini</taxon>
        <taxon>Catarrhini</taxon>
        <taxon>Hominidae</taxon>
        <taxon>Homo</taxon>
    </lineage>
</organism>
<sequence length="521" mass="58951">MKSQGQHWYSSSDKNCKVSFREKLLIIDSNLGVQDVENLKFLCIGLVPNKKLEKSSSASDVFEHLLAEDLLSEEDPFFLAELLYIIRQKKLLQHLNCTKEEVERLLPTRQRVSLFRNLLYELSEGIDSENLKDMIFLLKDSLPKTEMTSLSFLAFLEKQGKIDEDNLTCLEDLCKTVVPKLLRNIEKYKREKAIQIVTPPVDKEAESYQGEEELVSQTDVKTFLEALPQESWQNKHAGSNGNRATNGAPSLVSRGMQGASANTLNSETSTKRAAVYRMNRNHRGLCVIVNNHSFTSLKDRQGTHKDAEILSHVFQWLGFTVHIHNNVTKVEMEMVLQKQKCNPAHADGDCFVFCILTHGRFGAVYSSDEALIPIREIMSHFTALQCPRLAEKPKLFFIQACQGEEIQPSVSIEADALNPEQAPTSLQDSIPAEADFLLGLATVPGYVSFRHVEEGSWYIQSLCNHLKKLVPRMLKFLEKTMEIRGRKRTVWGAKQISATSLPTAISAQTPRPPMRRWSSVS</sequence>
<proteinExistence type="evidence at protein level"/>